<name>GSTCD_BOVIN</name>
<sequence>MKGIKKSLTEEYLYLDFSHQKEGCIFPLHTSVTLFLLSYCDCTVFKVFLVLPGESTGISLLKNVPSEGVEIQTISRQELPPIVQSCCLPAVVERPDNFCRAGLAVVLRHIIQKSYEADPSKKEILELLGFKKTCLKACAEVSQWTRLCELTVPLAVENFLKESFDQPPTIPAAILELEKKLSEPVRVHNDDKLRRQKLKQQKAAGVGPSLAKEKTKSKGHRQETSEEGDSSSASLELKVAFSKLTIHKEPASANREPSYVRKAKASDLPPLDHVFAEGLYFTLADIVLLPCIHHFLVIICRKLSGKLVEFPLVAAWYQRIQEVPRVQTAASQCGIQFISLPELQTTSSQQPPNLDEAPSAEEQNDPSFIGGPRPTMTKLMEKGIEVMFSPHPCPTWTLDWDTLPAAVSPKEGKMSSDRALRKQQQLNNLVYMVTNQAKPGDRIVDFCSGGGHVGIVLAHVLPSCQVILIENKELSLIRAKKRSDELGLSNIWFIQANMEYFTGMFNIGVALHACGVATDMVIEHCLKTRASFVTCPCCYGFIQNTSKVNFPKSELFKKTLSYKEHMILCRFADQTAVQLPPQRRLIGKQCMCLVDLDRARAAEEHGFSVQVISMEPESCSPKNNMIVGVPI</sequence>
<proteinExistence type="evidence at transcript level"/>
<feature type="chain" id="PRO_0000316951" description="Glutathione S-transferase C-terminal domain-containing protein">
    <location>
        <begin position="1"/>
        <end position="631"/>
    </location>
</feature>
<feature type="domain" description="GST C-terminal">
    <location>
        <begin position="128"/>
        <end position="330"/>
    </location>
</feature>
<feature type="region of interest" description="Disordered" evidence="2">
    <location>
        <begin position="188"/>
        <end position="233"/>
    </location>
</feature>
<feature type="region of interest" description="Disordered" evidence="2">
    <location>
        <begin position="345"/>
        <end position="373"/>
    </location>
</feature>
<feature type="compositionally biased region" description="Basic and acidic residues" evidence="2">
    <location>
        <begin position="211"/>
        <end position="224"/>
    </location>
</feature>
<feature type="modified residue" description="Phosphoserine" evidence="1">
    <location>
        <position position="231"/>
    </location>
</feature>
<comment type="subcellular location">
    <subcellularLocation>
        <location evidence="1">Cytoplasm</location>
    </subcellularLocation>
</comment>
<comment type="similarity">
    <text evidence="3">Belongs to the GSTCD family.</text>
</comment>
<organism>
    <name type="scientific">Bos taurus</name>
    <name type="common">Bovine</name>
    <dbReference type="NCBI Taxonomy" id="9913"/>
    <lineage>
        <taxon>Eukaryota</taxon>
        <taxon>Metazoa</taxon>
        <taxon>Chordata</taxon>
        <taxon>Craniata</taxon>
        <taxon>Vertebrata</taxon>
        <taxon>Euteleostomi</taxon>
        <taxon>Mammalia</taxon>
        <taxon>Eutheria</taxon>
        <taxon>Laurasiatheria</taxon>
        <taxon>Artiodactyla</taxon>
        <taxon>Ruminantia</taxon>
        <taxon>Pecora</taxon>
        <taxon>Bovidae</taxon>
        <taxon>Bovinae</taxon>
        <taxon>Bos</taxon>
    </lineage>
</organism>
<evidence type="ECO:0000250" key="1">
    <source>
        <dbReference type="UniProtKB" id="Q8NEC7"/>
    </source>
</evidence>
<evidence type="ECO:0000256" key="2">
    <source>
        <dbReference type="SAM" id="MobiDB-lite"/>
    </source>
</evidence>
<evidence type="ECO:0000305" key="3"/>
<protein>
    <recommendedName>
        <fullName>Glutathione S-transferase C-terminal domain-containing protein</fullName>
    </recommendedName>
</protein>
<keyword id="KW-0963">Cytoplasm</keyword>
<keyword id="KW-0597">Phosphoprotein</keyword>
<keyword id="KW-1185">Reference proteome</keyword>
<gene>
    <name type="primary">GSTCD</name>
</gene>
<dbReference type="EMBL" id="BC142532">
    <property type="protein sequence ID" value="AAI42533.1"/>
    <property type="molecule type" value="mRNA"/>
</dbReference>
<dbReference type="RefSeq" id="NP_001092505.1">
    <property type="nucleotide sequence ID" value="NM_001099035.1"/>
</dbReference>
<dbReference type="FunCoup" id="A5PKL6">
    <property type="interactions" value="3810"/>
</dbReference>
<dbReference type="STRING" id="9913.ENSBTAP00000018510"/>
<dbReference type="PaxDb" id="9913-ENSBTAP00000018510"/>
<dbReference type="Ensembl" id="ENSBTAT00000018510.6">
    <property type="protein sequence ID" value="ENSBTAP00000018510.6"/>
    <property type="gene ID" value="ENSBTAG00000013927.7"/>
</dbReference>
<dbReference type="GeneID" id="526205"/>
<dbReference type="KEGG" id="bta:526205"/>
<dbReference type="CTD" id="79807"/>
<dbReference type="VEuPathDB" id="HostDB:ENSBTAG00000013927"/>
<dbReference type="VGNC" id="VGNC:29684">
    <property type="gene designation" value="GSTCD"/>
</dbReference>
<dbReference type="eggNOG" id="ENOG502QUFE">
    <property type="taxonomic scope" value="Eukaryota"/>
</dbReference>
<dbReference type="GeneTree" id="ENSGT00390000004446"/>
<dbReference type="InParanoid" id="A5PKL6"/>
<dbReference type="OMA" id="WTRFCEV"/>
<dbReference type="OrthoDB" id="206598at2759"/>
<dbReference type="Proteomes" id="UP000009136">
    <property type="component" value="Chromosome 6"/>
</dbReference>
<dbReference type="Bgee" id="ENSBTAG00000013927">
    <property type="expression patterns" value="Expressed in prostate gland and 103 other cell types or tissues"/>
</dbReference>
<dbReference type="GO" id="GO:0005737">
    <property type="term" value="C:cytoplasm"/>
    <property type="evidence" value="ECO:0000250"/>
    <property type="project" value="UniProtKB"/>
</dbReference>
<dbReference type="FunFam" id="3.40.50.150:FF:000125">
    <property type="entry name" value="Glutathione S-transferase C-terminal domain-containing protein"/>
    <property type="match status" value="1"/>
</dbReference>
<dbReference type="Gene3D" id="1.20.1050.10">
    <property type="match status" value="1"/>
</dbReference>
<dbReference type="Gene3D" id="3.40.50.150">
    <property type="entry name" value="Vaccinia Virus protein VP39"/>
    <property type="match status" value="1"/>
</dbReference>
<dbReference type="InterPro" id="IPR036282">
    <property type="entry name" value="Glutathione-S-Trfase_C_sf"/>
</dbReference>
<dbReference type="InterPro" id="IPR025714">
    <property type="entry name" value="Methyltranfer_dom"/>
</dbReference>
<dbReference type="InterPro" id="IPR029063">
    <property type="entry name" value="SAM-dependent_MTases_sf"/>
</dbReference>
<dbReference type="PANTHER" id="PTHR13369">
    <property type="match status" value="1"/>
</dbReference>
<dbReference type="PANTHER" id="PTHR13369:SF0">
    <property type="entry name" value="GLUTATHIONE S-TRANSFERASE C-TERMINAL DOMAIN-CONTAINING PROTEIN"/>
    <property type="match status" value="1"/>
</dbReference>
<dbReference type="Pfam" id="PF13679">
    <property type="entry name" value="Methyltransf_32"/>
    <property type="match status" value="1"/>
</dbReference>
<dbReference type="SUPFAM" id="SSF47616">
    <property type="entry name" value="GST C-terminal domain-like"/>
    <property type="match status" value="1"/>
</dbReference>
<dbReference type="SUPFAM" id="SSF53335">
    <property type="entry name" value="S-adenosyl-L-methionine-dependent methyltransferases"/>
    <property type="match status" value="1"/>
</dbReference>
<reference key="1">
    <citation type="submission" date="2007-06" db="EMBL/GenBank/DDBJ databases">
        <authorList>
            <consortium name="NIH - Mammalian Gene Collection (MGC) project"/>
        </authorList>
    </citation>
    <scope>NUCLEOTIDE SEQUENCE [LARGE SCALE MRNA]</scope>
    <source>
        <strain>Hereford</strain>
        <tissue>Thymus</tissue>
    </source>
</reference>
<accession>A5PKL6</accession>